<proteinExistence type="inferred from homology"/>
<name>NUOH_NEIG1</name>
<accession>Q5F622</accession>
<feature type="chain" id="PRO_0000240086" description="NADH-quinone oxidoreductase subunit H">
    <location>
        <begin position="1"/>
        <end position="358"/>
    </location>
</feature>
<feature type="transmembrane region" description="Helical" evidence="1">
    <location>
        <begin position="20"/>
        <end position="40"/>
    </location>
</feature>
<feature type="transmembrane region" description="Helical" evidence="1">
    <location>
        <begin position="95"/>
        <end position="115"/>
    </location>
</feature>
<feature type="transmembrane region" description="Helical" evidence="1">
    <location>
        <begin position="128"/>
        <end position="148"/>
    </location>
</feature>
<feature type="transmembrane region" description="Helical" evidence="1">
    <location>
        <begin position="168"/>
        <end position="188"/>
    </location>
</feature>
<feature type="transmembrane region" description="Helical" evidence="1">
    <location>
        <begin position="206"/>
        <end position="226"/>
    </location>
</feature>
<feature type="transmembrane region" description="Helical" evidence="1">
    <location>
        <begin position="253"/>
        <end position="273"/>
    </location>
</feature>
<feature type="transmembrane region" description="Helical" evidence="1">
    <location>
        <begin position="295"/>
        <end position="315"/>
    </location>
</feature>
<feature type="transmembrane region" description="Helical" evidence="1">
    <location>
        <begin position="334"/>
        <end position="354"/>
    </location>
</feature>
<comment type="function">
    <text evidence="1">NDH-1 shuttles electrons from NADH, via FMN and iron-sulfur (Fe-S) centers, to quinones in the respiratory chain. The immediate electron acceptor for the enzyme in this species is believed to be ubiquinone. Couples the redox reaction to proton translocation (for every two electrons transferred, four hydrogen ions are translocated across the cytoplasmic membrane), and thus conserves the redox energy in a proton gradient. This subunit may bind ubiquinone.</text>
</comment>
<comment type="catalytic activity">
    <reaction evidence="1">
        <text>a quinone + NADH + 5 H(+)(in) = a quinol + NAD(+) + 4 H(+)(out)</text>
        <dbReference type="Rhea" id="RHEA:57888"/>
        <dbReference type="ChEBI" id="CHEBI:15378"/>
        <dbReference type="ChEBI" id="CHEBI:24646"/>
        <dbReference type="ChEBI" id="CHEBI:57540"/>
        <dbReference type="ChEBI" id="CHEBI:57945"/>
        <dbReference type="ChEBI" id="CHEBI:132124"/>
    </reaction>
</comment>
<comment type="subunit">
    <text evidence="1">NDH-1 is composed of 14 different subunits. Subunits NuoA, H, J, K, L, M, N constitute the membrane sector of the complex.</text>
</comment>
<comment type="subcellular location">
    <subcellularLocation>
        <location evidence="1">Cell inner membrane</location>
        <topology evidence="1">Multi-pass membrane protein</topology>
    </subcellularLocation>
</comment>
<comment type="similarity">
    <text evidence="1">Belongs to the complex I subunit 1 family.</text>
</comment>
<dbReference type="EC" id="7.1.1.-" evidence="1"/>
<dbReference type="EMBL" id="AE004969">
    <property type="protein sequence ID" value="AAW90365.1"/>
    <property type="molecule type" value="Genomic_DNA"/>
</dbReference>
<dbReference type="RefSeq" id="WP_003691926.1">
    <property type="nucleotide sequence ID" value="NC_002946.2"/>
</dbReference>
<dbReference type="RefSeq" id="YP_208777.1">
    <property type="nucleotide sequence ID" value="NC_002946.2"/>
</dbReference>
<dbReference type="SMR" id="Q5F622"/>
<dbReference type="STRING" id="242231.NGO_1744"/>
<dbReference type="GeneID" id="66754032"/>
<dbReference type="KEGG" id="ngo:NGO_1744"/>
<dbReference type="PATRIC" id="fig|242231.10.peg.2083"/>
<dbReference type="HOGENOM" id="CLU_015134_0_1_4"/>
<dbReference type="Proteomes" id="UP000000535">
    <property type="component" value="Chromosome"/>
</dbReference>
<dbReference type="GO" id="GO:0005886">
    <property type="term" value="C:plasma membrane"/>
    <property type="evidence" value="ECO:0007669"/>
    <property type="project" value="UniProtKB-SubCell"/>
</dbReference>
<dbReference type="GO" id="GO:0003954">
    <property type="term" value="F:NADH dehydrogenase activity"/>
    <property type="evidence" value="ECO:0007669"/>
    <property type="project" value="TreeGrafter"/>
</dbReference>
<dbReference type="GO" id="GO:0016655">
    <property type="term" value="F:oxidoreductase activity, acting on NAD(P)H, quinone or similar compound as acceptor"/>
    <property type="evidence" value="ECO:0007669"/>
    <property type="project" value="UniProtKB-UniRule"/>
</dbReference>
<dbReference type="GO" id="GO:0048038">
    <property type="term" value="F:quinone binding"/>
    <property type="evidence" value="ECO:0007669"/>
    <property type="project" value="UniProtKB-KW"/>
</dbReference>
<dbReference type="GO" id="GO:0009060">
    <property type="term" value="P:aerobic respiration"/>
    <property type="evidence" value="ECO:0007669"/>
    <property type="project" value="TreeGrafter"/>
</dbReference>
<dbReference type="HAMAP" id="MF_01350">
    <property type="entry name" value="NDH1_NuoH"/>
    <property type="match status" value="1"/>
</dbReference>
<dbReference type="InterPro" id="IPR001694">
    <property type="entry name" value="NADH_UbQ_OxRdtase_su1/FPO"/>
</dbReference>
<dbReference type="InterPro" id="IPR018086">
    <property type="entry name" value="NADH_UbQ_OxRdtase_su1_CS"/>
</dbReference>
<dbReference type="NCBIfam" id="NF004741">
    <property type="entry name" value="PRK06076.1-2"/>
    <property type="match status" value="1"/>
</dbReference>
<dbReference type="PANTHER" id="PTHR11432">
    <property type="entry name" value="NADH DEHYDROGENASE SUBUNIT 1"/>
    <property type="match status" value="1"/>
</dbReference>
<dbReference type="PANTHER" id="PTHR11432:SF3">
    <property type="entry name" value="NADH-UBIQUINONE OXIDOREDUCTASE CHAIN 1"/>
    <property type="match status" value="1"/>
</dbReference>
<dbReference type="Pfam" id="PF00146">
    <property type="entry name" value="NADHdh"/>
    <property type="match status" value="1"/>
</dbReference>
<dbReference type="PROSITE" id="PS00668">
    <property type="entry name" value="COMPLEX1_ND1_2"/>
    <property type="match status" value="1"/>
</dbReference>
<evidence type="ECO:0000255" key="1">
    <source>
        <dbReference type="HAMAP-Rule" id="MF_01350"/>
    </source>
</evidence>
<organism>
    <name type="scientific">Neisseria gonorrhoeae (strain ATCC 700825 / FA 1090)</name>
    <dbReference type="NCBI Taxonomy" id="242231"/>
    <lineage>
        <taxon>Bacteria</taxon>
        <taxon>Pseudomonadati</taxon>
        <taxon>Pseudomonadota</taxon>
        <taxon>Betaproteobacteria</taxon>
        <taxon>Neisseriales</taxon>
        <taxon>Neisseriaceae</taxon>
        <taxon>Neisseria</taxon>
    </lineage>
</organism>
<keyword id="KW-0997">Cell inner membrane</keyword>
<keyword id="KW-1003">Cell membrane</keyword>
<keyword id="KW-0472">Membrane</keyword>
<keyword id="KW-0520">NAD</keyword>
<keyword id="KW-0874">Quinone</keyword>
<keyword id="KW-1185">Reference proteome</keyword>
<keyword id="KW-1278">Translocase</keyword>
<keyword id="KW-0812">Transmembrane</keyword>
<keyword id="KW-1133">Transmembrane helix</keyword>
<keyword id="KW-0830">Ubiquinone</keyword>
<protein>
    <recommendedName>
        <fullName evidence="1">NADH-quinone oxidoreductase subunit H</fullName>
        <ecNumber evidence="1">7.1.1.-</ecNumber>
    </recommendedName>
    <alternativeName>
        <fullName evidence="1">NADH dehydrogenase I subunit H</fullName>
    </alternativeName>
    <alternativeName>
        <fullName evidence="1">NDH-1 subunit H</fullName>
    </alternativeName>
</protein>
<reference key="1">
    <citation type="submission" date="2003-03" db="EMBL/GenBank/DDBJ databases">
        <title>The complete genome sequence of Neisseria gonorrhoeae.</title>
        <authorList>
            <person name="Lewis L.A."/>
            <person name="Gillaspy A.F."/>
            <person name="McLaughlin R.E."/>
            <person name="Gipson M."/>
            <person name="Ducey T.F."/>
            <person name="Ownbey T."/>
            <person name="Hartman K."/>
            <person name="Nydick C."/>
            <person name="Carson M.B."/>
            <person name="Vaughn J."/>
            <person name="Thomson C."/>
            <person name="Song L."/>
            <person name="Lin S."/>
            <person name="Yuan X."/>
            <person name="Najar F."/>
            <person name="Zhan M."/>
            <person name="Ren Q."/>
            <person name="Zhu H."/>
            <person name="Qi S."/>
            <person name="Kenton S.M."/>
            <person name="Lai H."/>
            <person name="White J.D."/>
            <person name="Clifton S."/>
            <person name="Roe B.A."/>
            <person name="Dyer D.W."/>
        </authorList>
    </citation>
    <scope>NUCLEOTIDE SEQUENCE [LARGE SCALE GENOMIC DNA]</scope>
    <source>
        <strain>ATCC 700825 / FA 1090</strain>
    </source>
</reference>
<sequence>MQEWFQNLFAATLGLGDLGITVGLVVSVIVKIVIILIPLILTVAYLTYFERKVIGFMQLRVGPNVTGPRGLIQPFADVFKLLFKEVTRPKLSNKALFYIGPIMSLAPSFAAWAVIPFNEEWVLTNINIGLLYILMITSLSVYGVIIAGWASNSKYSFLGAMRASAQSISYEIAMSAALVCVVMVSGSMNFSDIVAAQAKGIAGGSVFSWNWLPLFPIFIVYLISAVAETNRAPFDVAEGESEIVAGHHVEYSGFAFALFFLAEYIFMILIAALTSLMFLGGWLSPFPQSWGIVGTPSAFWMFVKMAAVLYWYLWIRATFPRYRYDQIMRLGWKVLIPIGFAYIVVLGVWMISPLNLWK</sequence>
<gene>
    <name evidence="1" type="primary">nuoH</name>
    <name type="ordered locus">NGO_1744</name>
</gene>